<gene>
    <name evidence="1" type="primary">fadA</name>
    <name type="ordered locus">Psyr_3289</name>
</gene>
<dbReference type="EC" id="2.3.1.16" evidence="1"/>
<dbReference type="EMBL" id="CP000075">
    <property type="protein sequence ID" value="AAY38321.1"/>
    <property type="molecule type" value="Genomic_DNA"/>
</dbReference>
<dbReference type="RefSeq" id="WP_011268334.1">
    <property type="nucleotide sequence ID" value="NC_007005.1"/>
</dbReference>
<dbReference type="RefSeq" id="YP_236359.1">
    <property type="nucleotide sequence ID" value="NC_007005.1"/>
</dbReference>
<dbReference type="SMR" id="Q4ZRA1"/>
<dbReference type="STRING" id="205918.Psyr_3289"/>
<dbReference type="KEGG" id="psb:Psyr_3289"/>
<dbReference type="PATRIC" id="fig|205918.7.peg.3363"/>
<dbReference type="eggNOG" id="COG0183">
    <property type="taxonomic scope" value="Bacteria"/>
</dbReference>
<dbReference type="HOGENOM" id="CLU_031026_2_2_6"/>
<dbReference type="OrthoDB" id="8951704at2"/>
<dbReference type="UniPathway" id="UPA00659"/>
<dbReference type="Proteomes" id="UP000000426">
    <property type="component" value="Chromosome"/>
</dbReference>
<dbReference type="GO" id="GO:0005737">
    <property type="term" value="C:cytoplasm"/>
    <property type="evidence" value="ECO:0007669"/>
    <property type="project" value="UniProtKB-SubCell"/>
</dbReference>
<dbReference type="GO" id="GO:0003988">
    <property type="term" value="F:acetyl-CoA C-acyltransferase activity"/>
    <property type="evidence" value="ECO:0007669"/>
    <property type="project" value="UniProtKB-UniRule"/>
</dbReference>
<dbReference type="GO" id="GO:0006635">
    <property type="term" value="P:fatty acid beta-oxidation"/>
    <property type="evidence" value="ECO:0007669"/>
    <property type="project" value="UniProtKB-UniRule"/>
</dbReference>
<dbReference type="GO" id="GO:0010124">
    <property type="term" value="P:phenylacetate catabolic process"/>
    <property type="evidence" value="ECO:0007669"/>
    <property type="project" value="TreeGrafter"/>
</dbReference>
<dbReference type="CDD" id="cd00751">
    <property type="entry name" value="thiolase"/>
    <property type="match status" value="1"/>
</dbReference>
<dbReference type="FunFam" id="3.40.47.10:FF:000010">
    <property type="entry name" value="Acetyl-CoA acetyltransferase (Thiolase)"/>
    <property type="match status" value="1"/>
</dbReference>
<dbReference type="Gene3D" id="3.40.47.10">
    <property type="match status" value="2"/>
</dbReference>
<dbReference type="HAMAP" id="MF_01620">
    <property type="entry name" value="FadA"/>
    <property type="match status" value="1"/>
</dbReference>
<dbReference type="InterPro" id="IPR012805">
    <property type="entry name" value="FadA"/>
</dbReference>
<dbReference type="InterPro" id="IPR002155">
    <property type="entry name" value="Thiolase"/>
</dbReference>
<dbReference type="InterPro" id="IPR016039">
    <property type="entry name" value="Thiolase-like"/>
</dbReference>
<dbReference type="InterPro" id="IPR050215">
    <property type="entry name" value="Thiolase-like_sf_Thiolase"/>
</dbReference>
<dbReference type="InterPro" id="IPR020615">
    <property type="entry name" value="Thiolase_acyl_enz_int_AS"/>
</dbReference>
<dbReference type="InterPro" id="IPR020610">
    <property type="entry name" value="Thiolase_AS"/>
</dbReference>
<dbReference type="InterPro" id="IPR020617">
    <property type="entry name" value="Thiolase_C"/>
</dbReference>
<dbReference type="InterPro" id="IPR020613">
    <property type="entry name" value="Thiolase_CS"/>
</dbReference>
<dbReference type="InterPro" id="IPR020616">
    <property type="entry name" value="Thiolase_N"/>
</dbReference>
<dbReference type="NCBIfam" id="TIGR01930">
    <property type="entry name" value="AcCoA-C-Actrans"/>
    <property type="match status" value="1"/>
</dbReference>
<dbReference type="NCBIfam" id="TIGR02445">
    <property type="entry name" value="fadA"/>
    <property type="match status" value="1"/>
</dbReference>
<dbReference type="NCBIfam" id="NF006510">
    <property type="entry name" value="PRK08947.1"/>
    <property type="match status" value="1"/>
</dbReference>
<dbReference type="PANTHER" id="PTHR43853:SF11">
    <property type="entry name" value="3-KETOACYL-COA THIOLASE FADA"/>
    <property type="match status" value="1"/>
</dbReference>
<dbReference type="PANTHER" id="PTHR43853">
    <property type="entry name" value="3-KETOACYL-COA THIOLASE, PEROXISOMAL"/>
    <property type="match status" value="1"/>
</dbReference>
<dbReference type="Pfam" id="PF02803">
    <property type="entry name" value="Thiolase_C"/>
    <property type="match status" value="1"/>
</dbReference>
<dbReference type="Pfam" id="PF00108">
    <property type="entry name" value="Thiolase_N"/>
    <property type="match status" value="1"/>
</dbReference>
<dbReference type="PIRSF" id="PIRSF000429">
    <property type="entry name" value="Ac-CoA_Ac_transf"/>
    <property type="match status" value="1"/>
</dbReference>
<dbReference type="SUPFAM" id="SSF53901">
    <property type="entry name" value="Thiolase-like"/>
    <property type="match status" value="2"/>
</dbReference>
<dbReference type="PROSITE" id="PS00098">
    <property type="entry name" value="THIOLASE_1"/>
    <property type="match status" value="1"/>
</dbReference>
<dbReference type="PROSITE" id="PS00737">
    <property type="entry name" value="THIOLASE_2"/>
    <property type="match status" value="1"/>
</dbReference>
<dbReference type="PROSITE" id="PS00099">
    <property type="entry name" value="THIOLASE_3"/>
    <property type="match status" value="1"/>
</dbReference>
<feature type="chain" id="PRO_0000206385" description="3-ketoacyl-CoA thiolase">
    <location>
        <begin position="1"/>
        <end position="391"/>
    </location>
</feature>
<feature type="active site" description="Acyl-thioester intermediate" evidence="1">
    <location>
        <position position="95"/>
    </location>
</feature>
<feature type="active site" description="Proton acceptor" evidence="1">
    <location>
        <position position="347"/>
    </location>
</feature>
<feature type="active site" description="Proton acceptor" evidence="1">
    <location>
        <position position="377"/>
    </location>
</feature>
<reference key="1">
    <citation type="journal article" date="2005" name="Proc. Natl. Acad. Sci. U.S.A.">
        <title>Comparison of the complete genome sequences of Pseudomonas syringae pv. syringae B728a and pv. tomato DC3000.</title>
        <authorList>
            <person name="Feil H."/>
            <person name="Feil W.S."/>
            <person name="Chain P."/>
            <person name="Larimer F."/>
            <person name="Dibartolo G."/>
            <person name="Copeland A."/>
            <person name="Lykidis A."/>
            <person name="Trong S."/>
            <person name="Nolan M."/>
            <person name="Goltsman E."/>
            <person name="Thiel J."/>
            <person name="Malfatti S."/>
            <person name="Loper J.E."/>
            <person name="Lapidus A."/>
            <person name="Detter J.C."/>
            <person name="Land M."/>
            <person name="Richardson P.M."/>
            <person name="Kyrpides N.C."/>
            <person name="Ivanova N."/>
            <person name="Lindow S.E."/>
        </authorList>
    </citation>
    <scope>NUCLEOTIDE SEQUENCE [LARGE SCALE GENOMIC DNA]</scope>
    <source>
        <strain>B728a</strain>
    </source>
</reference>
<protein>
    <recommendedName>
        <fullName evidence="1">3-ketoacyl-CoA thiolase</fullName>
        <ecNumber evidence="1">2.3.1.16</ecNumber>
    </recommendedName>
    <alternativeName>
        <fullName evidence="1">Acetyl-CoA acyltransferase</fullName>
    </alternativeName>
    <alternativeName>
        <fullName evidence="1">Beta-ketothiolase</fullName>
    </alternativeName>
    <alternativeName>
        <fullName evidence="1">Fatty acid oxidation complex subunit beta</fullName>
    </alternativeName>
</protein>
<proteinExistence type="inferred from homology"/>
<name>FADA_PSEU2</name>
<comment type="function">
    <text evidence="1">Catalyzes the final step of fatty acid oxidation in which acetyl-CoA is released and the CoA ester of a fatty acid two carbons shorter is formed.</text>
</comment>
<comment type="catalytic activity">
    <reaction evidence="1">
        <text>an acyl-CoA + acetyl-CoA = a 3-oxoacyl-CoA + CoA</text>
        <dbReference type="Rhea" id="RHEA:21564"/>
        <dbReference type="ChEBI" id="CHEBI:57287"/>
        <dbReference type="ChEBI" id="CHEBI:57288"/>
        <dbReference type="ChEBI" id="CHEBI:58342"/>
        <dbReference type="ChEBI" id="CHEBI:90726"/>
        <dbReference type="EC" id="2.3.1.16"/>
    </reaction>
</comment>
<comment type="pathway">
    <text evidence="1">Lipid metabolism; fatty acid beta-oxidation.</text>
</comment>
<comment type="subunit">
    <text evidence="1">Heterotetramer of two alpha chains (FadB) and two beta chains (FadA).</text>
</comment>
<comment type="subcellular location">
    <subcellularLocation>
        <location evidence="1">Cytoplasm</location>
    </subcellularLocation>
</comment>
<comment type="similarity">
    <text evidence="1">Belongs to the thiolase-like superfamily. Thiolase family.</text>
</comment>
<sequence length="391" mass="41708">MSLNPRDVVIVDFGRTPMGRSKGGMHRNTRAEDMSAHLISKLLERNNKVDPAEVEDVIWGCVNQTLEQGWNIARMASLLTQIPHTSAAQTVSRLCGSSMSALHTAAQAIMTNNGDVFIIGGVEHMGHVSMMHGVDPNPHMSLHAAKASGMMGLTAEMLGKMHGITREQQDAFGLRSHQLAHKATLEGKFKDEIIPMQGYDENGFLKVFDYDETIRPDTTLESLAALKPAFNPKGGTVTAGTSSQITDGASCMIVMSAQRAQDLGIQPMAVIRSMAVAGVDPAIMGYGPVPATQKALKRAGLSIADIDFFELNEAFAAQALPVLKDLKVLDKMNEKVNLHGGAIALGHPFGCSGARISGTLLNVMKQNGGTFGVSTMCIGLGQGIATVFERV</sequence>
<organism>
    <name type="scientific">Pseudomonas syringae pv. syringae (strain B728a)</name>
    <dbReference type="NCBI Taxonomy" id="205918"/>
    <lineage>
        <taxon>Bacteria</taxon>
        <taxon>Pseudomonadati</taxon>
        <taxon>Pseudomonadota</taxon>
        <taxon>Gammaproteobacteria</taxon>
        <taxon>Pseudomonadales</taxon>
        <taxon>Pseudomonadaceae</taxon>
        <taxon>Pseudomonas</taxon>
        <taxon>Pseudomonas syringae</taxon>
    </lineage>
</organism>
<evidence type="ECO:0000255" key="1">
    <source>
        <dbReference type="HAMAP-Rule" id="MF_01620"/>
    </source>
</evidence>
<accession>Q4ZRA1</accession>
<keyword id="KW-0012">Acyltransferase</keyword>
<keyword id="KW-0963">Cytoplasm</keyword>
<keyword id="KW-0276">Fatty acid metabolism</keyword>
<keyword id="KW-0442">Lipid degradation</keyword>
<keyword id="KW-0443">Lipid metabolism</keyword>
<keyword id="KW-0808">Transferase</keyword>